<dbReference type="EMBL" id="CP001233">
    <property type="protein sequence ID" value="ACP06680.1"/>
    <property type="molecule type" value="Genomic_DNA"/>
</dbReference>
<dbReference type="RefSeq" id="WP_001279493.1">
    <property type="nucleotide sequence ID" value="NC_012578.1"/>
</dbReference>
<dbReference type="SMR" id="C3LR02"/>
<dbReference type="GeneID" id="94012893"/>
<dbReference type="KEGG" id="vcm:VCM66_2382"/>
<dbReference type="HOGENOM" id="CLU_066645_1_0_6"/>
<dbReference type="Proteomes" id="UP000001217">
    <property type="component" value="Chromosome I"/>
</dbReference>
<dbReference type="GO" id="GO:0043590">
    <property type="term" value="C:bacterial nucleoid"/>
    <property type="evidence" value="ECO:0007669"/>
    <property type="project" value="TreeGrafter"/>
</dbReference>
<dbReference type="GO" id="GO:0006310">
    <property type="term" value="P:DNA recombination"/>
    <property type="evidence" value="ECO:0007669"/>
    <property type="project" value="UniProtKB-UniRule"/>
</dbReference>
<dbReference type="GO" id="GO:0006302">
    <property type="term" value="P:double-strand break repair"/>
    <property type="evidence" value="ECO:0007669"/>
    <property type="project" value="TreeGrafter"/>
</dbReference>
<dbReference type="Gene3D" id="2.40.50.140">
    <property type="entry name" value="Nucleic acid-binding proteins"/>
    <property type="match status" value="1"/>
</dbReference>
<dbReference type="Gene3D" id="1.20.1440.120">
    <property type="entry name" value="Recombination protein O, C-terminal domain"/>
    <property type="match status" value="1"/>
</dbReference>
<dbReference type="HAMAP" id="MF_00201">
    <property type="entry name" value="RecO"/>
    <property type="match status" value="1"/>
</dbReference>
<dbReference type="InterPro" id="IPR037278">
    <property type="entry name" value="ARFGAP/RecO"/>
</dbReference>
<dbReference type="InterPro" id="IPR022572">
    <property type="entry name" value="DNA_rep/recomb_RecO_N"/>
</dbReference>
<dbReference type="InterPro" id="IPR012340">
    <property type="entry name" value="NA-bd_OB-fold"/>
</dbReference>
<dbReference type="InterPro" id="IPR003717">
    <property type="entry name" value="RecO"/>
</dbReference>
<dbReference type="InterPro" id="IPR042242">
    <property type="entry name" value="RecO_C"/>
</dbReference>
<dbReference type="NCBIfam" id="TIGR00613">
    <property type="entry name" value="reco"/>
    <property type="match status" value="1"/>
</dbReference>
<dbReference type="PANTHER" id="PTHR33991">
    <property type="entry name" value="DNA REPAIR PROTEIN RECO"/>
    <property type="match status" value="1"/>
</dbReference>
<dbReference type="PANTHER" id="PTHR33991:SF1">
    <property type="entry name" value="DNA REPAIR PROTEIN RECO"/>
    <property type="match status" value="1"/>
</dbReference>
<dbReference type="Pfam" id="PF02565">
    <property type="entry name" value="RecO_C"/>
    <property type="match status" value="1"/>
</dbReference>
<dbReference type="Pfam" id="PF11967">
    <property type="entry name" value="RecO_N"/>
    <property type="match status" value="1"/>
</dbReference>
<dbReference type="SUPFAM" id="SSF57863">
    <property type="entry name" value="ArfGap/RecO-like zinc finger"/>
    <property type="match status" value="1"/>
</dbReference>
<dbReference type="SUPFAM" id="SSF50249">
    <property type="entry name" value="Nucleic acid-binding proteins"/>
    <property type="match status" value="1"/>
</dbReference>
<name>RECO_VIBCM</name>
<organism>
    <name type="scientific">Vibrio cholerae serotype O1 (strain M66-2)</name>
    <dbReference type="NCBI Taxonomy" id="579112"/>
    <lineage>
        <taxon>Bacteria</taxon>
        <taxon>Pseudomonadati</taxon>
        <taxon>Pseudomonadota</taxon>
        <taxon>Gammaproteobacteria</taxon>
        <taxon>Vibrionales</taxon>
        <taxon>Vibrionaceae</taxon>
        <taxon>Vibrio</taxon>
    </lineage>
</organism>
<reference key="1">
    <citation type="journal article" date="2008" name="PLoS ONE">
        <title>A recalibrated molecular clock and independent origins for the cholera pandemic clones.</title>
        <authorList>
            <person name="Feng L."/>
            <person name="Reeves P.R."/>
            <person name="Lan R."/>
            <person name="Ren Y."/>
            <person name="Gao C."/>
            <person name="Zhou Z."/>
            <person name="Ren Y."/>
            <person name="Cheng J."/>
            <person name="Wang W."/>
            <person name="Wang J."/>
            <person name="Qian W."/>
            <person name="Li D."/>
            <person name="Wang L."/>
        </authorList>
    </citation>
    <scope>NUCLEOTIDE SEQUENCE [LARGE SCALE GENOMIC DNA]</scope>
    <source>
        <strain>M66-2</strain>
    </source>
</reference>
<feature type="chain" id="PRO_1000193431" description="DNA repair protein RecO">
    <location>
        <begin position="1"/>
        <end position="241"/>
    </location>
</feature>
<evidence type="ECO:0000255" key="1">
    <source>
        <dbReference type="HAMAP-Rule" id="MF_00201"/>
    </source>
</evidence>
<protein>
    <recommendedName>
        <fullName evidence="1">DNA repair protein RecO</fullName>
    </recommendedName>
    <alternativeName>
        <fullName evidence="1">Recombination protein O</fullName>
    </alternativeName>
</protein>
<keyword id="KW-0227">DNA damage</keyword>
<keyword id="KW-0233">DNA recombination</keyword>
<keyword id="KW-0234">DNA repair</keyword>
<gene>
    <name evidence="1" type="primary">recO</name>
    <name type="ordered locus">VCM66_2382</name>
</gene>
<comment type="function">
    <text evidence="1">Involved in DNA repair and RecF pathway recombination.</text>
</comment>
<comment type="similarity">
    <text evidence="1">Belongs to the RecO family.</text>
</comment>
<proteinExistence type="inferred from homology"/>
<sequence>MSDGLQRCFVLHRRPYSESSLILDVFSEEYGRVTLMAKGARGKRSNLKGALQPFTPLLLKWSGNGSMKTLRQAEPISLGLPLSGVYLYSAMYINELVDRVLMPEVASPGLFHDYLFALTELAQSTNPEPALRRFELALLAAMGYGVDFLHCAGTGEPVSPDMTYRYREQKGFIASVRRDNLTFLGNELIAISERRFTSKEQLQAAKRFTRLALKPYLGGKPLKSRELFRQTTLPRARSTEE</sequence>
<accession>C3LR02</accession>